<sequence>MTQIIIAGAVGLLVSIFVTPVLIRRFSAEGLGQEIREDGPKSHLRKRGTPTMGGIAILIGITVAYAVTGIVGQVTGTGGLTASGLLVLGLTLALGGLGFADDFIKLYMGRNLGLNKKAKLIGQLAISLIFGALILLFPNADGLTPGSSHLSFLRDLPTVDLAIGPKAVGIAIFLLFIYILISAWSNAVNLTDGLDGLAAGSTAIVMGTYTVITFWQFRNSCSAGAQPGCYDVRDPLDLAILAAAGLGACLGFLWWNAAPAKIFMGDTGSLALGGLVAGLSVASRTELLMIIVGALFVLEAASVVIQVAGYRTKKIRIFRMAPFHHHFENGGWAETTVVIRFWLIAAVAALIGASIFYGEWLSLTGV</sequence>
<dbReference type="EC" id="2.7.8.13" evidence="1"/>
<dbReference type="EMBL" id="BX248358">
    <property type="protein sequence ID" value="CAE50126.1"/>
    <property type="status" value="ALT_INIT"/>
    <property type="molecule type" value="Genomic_DNA"/>
</dbReference>
<dbReference type="RefSeq" id="WP_014302125.1">
    <property type="nucleotide sequence ID" value="NC_002935.2"/>
</dbReference>
<dbReference type="SMR" id="Q6NGC5"/>
<dbReference type="STRING" id="257309.DIP1601"/>
<dbReference type="KEGG" id="cdi:DIP1601"/>
<dbReference type="HOGENOM" id="CLU_023982_0_1_11"/>
<dbReference type="UniPathway" id="UPA00219"/>
<dbReference type="Proteomes" id="UP000002198">
    <property type="component" value="Chromosome"/>
</dbReference>
<dbReference type="GO" id="GO:0005886">
    <property type="term" value="C:plasma membrane"/>
    <property type="evidence" value="ECO:0007669"/>
    <property type="project" value="UniProtKB-SubCell"/>
</dbReference>
<dbReference type="GO" id="GO:0046872">
    <property type="term" value="F:metal ion binding"/>
    <property type="evidence" value="ECO:0007669"/>
    <property type="project" value="UniProtKB-KW"/>
</dbReference>
<dbReference type="GO" id="GO:0008963">
    <property type="term" value="F:phospho-N-acetylmuramoyl-pentapeptide-transferase activity"/>
    <property type="evidence" value="ECO:0007669"/>
    <property type="project" value="UniProtKB-UniRule"/>
</dbReference>
<dbReference type="GO" id="GO:0051992">
    <property type="term" value="F:UDP-N-acetylmuramoyl-L-alanyl-D-glutamyl-meso-2,6-diaminopimelyl-D-alanyl-D-alanine:undecaprenyl-phosphate transferase activity"/>
    <property type="evidence" value="ECO:0007669"/>
    <property type="project" value="RHEA"/>
</dbReference>
<dbReference type="GO" id="GO:0051301">
    <property type="term" value="P:cell division"/>
    <property type="evidence" value="ECO:0007669"/>
    <property type="project" value="UniProtKB-KW"/>
</dbReference>
<dbReference type="GO" id="GO:0071555">
    <property type="term" value="P:cell wall organization"/>
    <property type="evidence" value="ECO:0007669"/>
    <property type="project" value="UniProtKB-KW"/>
</dbReference>
<dbReference type="GO" id="GO:0009252">
    <property type="term" value="P:peptidoglycan biosynthetic process"/>
    <property type="evidence" value="ECO:0007669"/>
    <property type="project" value="UniProtKB-UniRule"/>
</dbReference>
<dbReference type="GO" id="GO:0008360">
    <property type="term" value="P:regulation of cell shape"/>
    <property type="evidence" value="ECO:0007669"/>
    <property type="project" value="UniProtKB-KW"/>
</dbReference>
<dbReference type="CDD" id="cd06852">
    <property type="entry name" value="GT_MraY"/>
    <property type="match status" value="1"/>
</dbReference>
<dbReference type="HAMAP" id="MF_00038">
    <property type="entry name" value="MraY"/>
    <property type="match status" value="1"/>
</dbReference>
<dbReference type="InterPro" id="IPR000715">
    <property type="entry name" value="Glycosyl_transferase_4"/>
</dbReference>
<dbReference type="InterPro" id="IPR003524">
    <property type="entry name" value="PNAcMuramoyl-5peptid_Trfase"/>
</dbReference>
<dbReference type="InterPro" id="IPR018480">
    <property type="entry name" value="PNAcMuramoyl-5peptid_Trfase_CS"/>
</dbReference>
<dbReference type="NCBIfam" id="TIGR00445">
    <property type="entry name" value="mraY"/>
    <property type="match status" value="1"/>
</dbReference>
<dbReference type="PANTHER" id="PTHR22926">
    <property type="entry name" value="PHOSPHO-N-ACETYLMURAMOYL-PENTAPEPTIDE-TRANSFERASE"/>
    <property type="match status" value="1"/>
</dbReference>
<dbReference type="PANTHER" id="PTHR22926:SF5">
    <property type="entry name" value="PHOSPHO-N-ACETYLMURAMOYL-PENTAPEPTIDE-TRANSFERASE HOMOLOG"/>
    <property type="match status" value="1"/>
</dbReference>
<dbReference type="Pfam" id="PF00953">
    <property type="entry name" value="Glycos_transf_4"/>
    <property type="match status" value="1"/>
</dbReference>
<dbReference type="Pfam" id="PF10555">
    <property type="entry name" value="MraY_sig1"/>
    <property type="match status" value="1"/>
</dbReference>
<dbReference type="PROSITE" id="PS01347">
    <property type="entry name" value="MRAY_1"/>
    <property type="match status" value="1"/>
</dbReference>
<dbReference type="PROSITE" id="PS01348">
    <property type="entry name" value="MRAY_2"/>
    <property type="match status" value="1"/>
</dbReference>
<evidence type="ECO:0000255" key="1">
    <source>
        <dbReference type="HAMAP-Rule" id="MF_00038"/>
    </source>
</evidence>
<evidence type="ECO:0000305" key="2"/>
<organism>
    <name type="scientific">Corynebacterium diphtheriae (strain ATCC 700971 / NCTC 13129 / Biotype gravis)</name>
    <dbReference type="NCBI Taxonomy" id="257309"/>
    <lineage>
        <taxon>Bacteria</taxon>
        <taxon>Bacillati</taxon>
        <taxon>Actinomycetota</taxon>
        <taxon>Actinomycetes</taxon>
        <taxon>Mycobacteriales</taxon>
        <taxon>Corynebacteriaceae</taxon>
        <taxon>Corynebacterium</taxon>
    </lineage>
</organism>
<protein>
    <recommendedName>
        <fullName evidence="1">Phospho-N-acetylmuramoyl-pentapeptide-transferase</fullName>
        <ecNumber evidence="1">2.7.8.13</ecNumber>
    </recommendedName>
    <alternativeName>
        <fullName evidence="1">UDP-MurNAc-pentapeptide phosphotransferase</fullName>
    </alternativeName>
</protein>
<reference key="1">
    <citation type="journal article" date="2003" name="Nucleic Acids Res.">
        <title>The complete genome sequence and analysis of Corynebacterium diphtheriae NCTC13129.</title>
        <authorList>
            <person name="Cerdeno-Tarraga A.-M."/>
            <person name="Efstratiou A."/>
            <person name="Dover L.G."/>
            <person name="Holden M.T.G."/>
            <person name="Pallen M.J."/>
            <person name="Bentley S.D."/>
            <person name="Besra G.S."/>
            <person name="Churcher C.M."/>
            <person name="James K.D."/>
            <person name="De Zoysa A."/>
            <person name="Chillingworth T."/>
            <person name="Cronin A."/>
            <person name="Dowd L."/>
            <person name="Feltwell T."/>
            <person name="Hamlin N."/>
            <person name="Holroyd S."/>
            <person name="Jagels K."/>
            <person name="Moule S."/>
            <person name="Quail M.A."/>
            <person name="Rabbinowitsch E."/>
            <person name="Rutherford K.M."/>
            <person name="Thomson N.R."/>
            <person name="Unwin L."/>
            <person name="Whitehead S."/>
            <person name="Barrell B.G."/>
            <person name="Parkhill J."/>
        </authorList>
    </citation>
    <scope>NUCLEOTIDE SEQUENCE [LARGE SCALE GENOMIC DNA]</scope>
    <source>
        <strain>ATCC 700971 / NCTC 13129 / Biotype gravis</strain>
    </source>
</reference>
<feature type="chain" id="PRO_0000108813" description="Phospho-N-acetylmuramoyl-pentapeptide-transferase">
    <location>
        <begin position="1"/>
        <end position="366"/>
    </location>
</feature>
<feature type="transmembrane region" description="Helical" evidence="1">
    <location>
        <begin position="3"/>
        <end position="23"/>
    </location>
</feature>
<feature type="transmembrane region" description="Helical" evidence="1">
    <location>
        <begin position="52"/>
        <end position="72"/>
    </location>
</feature>
<feature type="transmembrane region" description="Helical" evidence="1">
    <location>
        <begin position="80"/>
        <end position="100"/>
    </location>
</feature>
<feature type="transmembrane region" description="Helical" evidence="1">
    <location>
        <begin position="120"/>
        <end position="140"/>
    </location>
</feature>
<feature type="transmembrane region" description="Helical" evidence="1">
    <location>
        <begin position="161"/>
        <end position="181"/>
    </location>
</feature>
<feature type="transmembrane region" description="Helical" evidence="1">
    <location>
        <begin position="197"/>
        <end position="217"/>
    </location>
</feature>
<feature type="transmembrane region" description="Helical" evidence="1">
    <location>
        <begin position="238"/>
        <end position="258"/>
    </location>
</feature>
<feature type="transmembrane region" description="Helical" evidence="1">
    <location>
        <begin position="262"/>
        <end position="282"/>
    </location>
</feature>
<feature type="transmembrane region" description="Helical" evidence="1">
    <location>
        <begin position="287"/>
        <end position="307"/>
    </location>
</feature>
<feature type="transmembrane region" description="Helical" evidence="1">
    <location>
        <begin position="341"/>
        <end position="361"/>
    </location>
</feature>
<keyword id="KW-0131">Cell cycle</keyword>
<keyword id="KW-0132">Cell division</keyword>
<keyword id="KW-1003">Cell membrane</keyword>
<keyword id="KW-0133">Cell shape</keyword>
<keyword id="KW-0961">Cell wall biogenesis/degradation</keyword>
<keyword id="KW-0460">Magnesium</keyword>
<keyword id="KW-0472">Membrane</keyword>
<keyword id="KW-0479">Metal-binding</keyword>
<keyword id="KW-0573">Peptidoglycan synthesis</keyword>
<keyword id="KW-1185">Reference proteome</keyword>
<keyword id="KW-0808">Transferase</keyword>
<keyword id="KW-0812">Transmembrane</keyword>
<keyword id="KW-1133">Transmembrane helix</keyword>
<accession>Q6NGC5</accession>
<proteinExistence type="inferred from homology"/>
<comment type="function">
    <text evidence="1">Catalyzes the initial step of the lipid cycle reactions in the biosynthesis of the cell wall peptidoglycan: transfers peptidoglycan precursor phospho-MurNAc-pentapeptide from UDP-MurNAc-pentapeptide onto the lipid carrier undecaprenyl phosphate, yielding undecaprenyl-pyrophosphoryl-MurNAc-pentapeptide, known as lipid I.</text>
</comment>
<comment type="catalytic activity">
    <reaction evidence="1">
        <text>UDP-N-acetyl-alpha-D-muramoyl-L-alanyl-gamma-D-glutamyl-meso-2,6-diaminopimeloyl-D-alanyl-D-alanine + di-trans,octa-cis-undecaprenyl phosphate = di-trans,octa-cis-undecaprenyl diphospho-N-acetyl-alpha-D-muramoyl-L-alanyl-D-glutamyl-meso-2,6-diaminopimeloyl-D-alanyl-D-alanine + UMP</text>
        <dbReference type="Rhea" id="RHEA:28386"/>
        <dbReference type="ChEBI" id="CHEBI:57865"/>
        <dbReference type="ChEBI" id="CHEBI:60392"/>
        <dbReference type="ChEBI" id="CHEBI:61386"/>
        <dbReference type="ChEBI" id="CHEBI:61387"/>
        <dbReference type="EC" id="2.7.8.13"/>
    </reaction>
</comment>
<comment type="cofactor">
    <cofactor evidence="1">
        <name>Mg(2+)</name>
        <dbReference type="ChEBI" id="CHEBI:18420"/>
    </cofactor>
</comment>
<comment type="pathway">
    <text evidence="1">Cell wall biogenesis; peptidoglycan biosynthesis.</text>
</comment>
<comment type="subcellular location">
    <subcellularLocation>
        <location evidence="1">Cell membrane</location>
        <topology evidence="1">Multi-pass membrane protein</topology>
    </subcellularLocation>
</comment>
<comment type="similarity">
    <text evidence="1">Belongs to the glycosyltransferase 4 family. MraY subfamily.</text>
</comment>
<comment type="sequence caution" evidence="2">
    <conflict type="erroneous initiation">
        <sequence resource="EMBL-CDS" id="CAE50126"/>
    </conflict>
</comment>
<name>MRAY_CORDI</name>
<gene>
    <name evidence="1" type="primary">mraY</name>
    <name type="ordered locus">DIP1601</name>
</gene>